<evidence type="ECO:0000250" key="1"/>
<evidence type="ECO:0000305" key="2"/>
<name>PYRDB_THEPX</name>
<proteinExistence type="inferred from homology"/>
<accession>B0K2E5</accession>
<reference key="1">
    <citation type="submission" date="2008-01" db="EMBL/GenBank/DDBJ databases">
        <title>Complete sequence of Thermoanaerobacter sp. X514.</title>
        <authorList>
            <consortium name="US DOE Joint Genome Institute"/>
            <person name="Copeland A."/>
            <person name="Lucas S."/>
            <person name="Lapidus A."/>
            <person name="Barry K."/>
            <person name="Glavina del Rio T."/>
            <person name="Dalin E."/>
            <person name="Tice H."/>
            <person name="Pitluck S."/>
            <person name="Bruce D."/>
            <person name="Goodwin L."/>
            <person name="Saunders E."/>
            <person name="Brettin T."/>
            <person name="Detter J.C."/>
            <person name="Han C."/>
            <person name="Schmutz J."/>
            <person name="Larimer F."/>
            <person name="Land M."/>
            <person name="Hauser L."/>
            <person name="Kyrpides N."/>
            <person name="Kim E."/>
            <person name="Hemme C."/>
            <person name="Fields M.W."/>
            <person name="He Z."/>
            <person name="Zhou J."/>
            <person name="Richardson P."/>
        </authorList>
    </citation>
    <scope>NUCLEOTIDE SEQUENCE [LARGE SCALE GENOMIC DNA]</scope>
    <source>
        <strain>X514</strain>
    </source>
</reference>
<keyword id="KW-0963">Cytoplasm</keyword>
<keyword id="KW-0285">Flavoprotein</keyword>
<keyword id="KW-0288">FMN</keyword>
<keyword id="KW-0520">NAD</keyword>
<keyword id="KW-0560">Oxidoreductase</keyword>
<keyword id="KW-0665">Pyrimidine biosynthesis</keyword>
<organism>
    <name type="scientific">Thermoanaerobacter sp. (strain X514)</name>
    <dbReference type="NCBI Taxonomy" id="399726"/>
    <lineage>
        <taxon>Bacteria</taxon>
        <taxon>Bacillati</taxon>
        <taxon>Bacillota</taxon>
        <taxon>Clostridia</taxon>
        <taxon>Thermoanaerobacterales</taxon>
        <taxon>Thermoanaerobacteraceae</taxon>
        <taxon>Thermoanaerobacter</taxon>
    </lineage>
</organism>
<protein>
    <recommendedName>
        <fullName>Dihydroorotate dehydrogenase B (NAD(+)), catalytic subunit</fullName>
        <shortName>DHOD B</shortName>
        <shortName>DHODase B</shortName>
        <shortName>DHOdehase B</shortName>
        <ecNumber>1.3.1.14</ecNumber>
    </recommendedName>
    <alternativeName>
        <fullName>Dihydroorotate oxidase B</fullName>
    </alternativeName>
    <alternativeName>
        <fullName>Orotate reductase (NADH)</fullName>
    </alternativeName>
</protein>
<gene>
    <name type="primary">pyrD</name>
    <name type="ordered locus">Teth514_1814</name>
</gene>
<comment type="function">
    <text evidence="1">Catalyzes the conversion of dihydroorotate to orotate with NAD(+) as electron acceptor.</text>
</comment>
<comment type="catalytic activity">
    <reaction>
        <text>(S)-dihydroorotate + NAD(+) = orotate + NADH + H(+)</text>
        <dbReference type="Rhea" id="RHEA:13513"/>
        <dbReference type="ChEBI" id="CHEBI:15378"/>
        <dbReference type="ChEBI" id="CHEBI:30839"/>
        <dbReference type="ChEBI" id="CHEBI:30864"/>
        <dbReference type="ChEBI" id="CHEBI:57540"/>
        <dbReference type="ChEBI" id="CHEBI:57945"/>
        <dbReference type="EC" id="1.3.1.14"/>
    </reaction>
</comment>
<comment type="cofactor">
    <cofactor evidence="1">
        <name>FMN</name>
        <dbReference type="ChEBI" id="CHEBI:58210"/>
    </cofactor>
    <text evidence="1">Binds 1 FMN per subunit.</text>
</comment>
<comment type="pathway">
    <text>Pyrimidine metabolism; UMP biosynthesis via de novo pathway; orotate from (S)-dihydroorotate (NAD(+) route): step 1/1.</text>
</comment>
<comment type="subunit">
    <text evidence="1">Heterotetramer of 2 PyrK and 2 PyrD type B subunits.</text>
</comment>
<comment type="subcellular location">
    <subcellularLocation>
        <location evidence="1">Cytoplasm</location>
    </subcellularLocation>
</comment>
<comment type="similarity">
    <text evidence="2">Belongs to the dihydroorotate dehydrogenase family. Type 1 subfamily.</text>
</comment>
<dbReference type="EC" id="1.3.1.14"/>
<dbReference type="EMBL" id="CP000923">
    <property type="protein sequence ID" value="ABY93096.1"/>
    <property type="molecule type" value="Genomic_DNA"/>
</dbReference>
<dbReference type="RefSeq" id="WP_009052450.1">
    <property type="nucleotide sequence ID" value="NC_010320.1"/>
</dbReference>
<dbReference type="SMR" id="B0K2E5"/>
<dbReference type="KEGG" id="tex:Teth514_1814"/>
<dbReference type="HOGENOM" id="CLU_042042_0_0_9"/>
<dbReference type="UniPathway" id="UPA00070">
    <property type="reaction ID" value="UER00945"/>
</dbReference>
<dbReference type="Proteomes" id="UP000002155">
    <property type="component" value="Chromosome"/>
</dbReference>
<dbReference type="GO" id="GO:0005737">
    <property type="term" value="C:cytoplasm"/>
    <property type="evidence" value="ECO:0007669"/>
    <property type="project" value="UniProtKB-SubCell"/>
</dbReference>
<dbReference type="GO" id="GO:0004589">
    <property type="term" value="F:dihydroorotate dehydrogenase (NAD+) activity"/>
    <property type="evidence" value="ECO:0007669"/>
    <property type="project" value="UniProtKB-EC"/>
</dbReference>
<dbReference type="GO" id="GO:0006207">
    <property type="term" value="P:'de novo' pyrimidine nucleobase biosynthetic process"/>
    <property type="evidence" value="ECO:0007669"/>
    <property type="project" value="InterPro"/>
</dbReference>
<dbReference type="GO" id="GO:0044205">
    <property type="term" value="P:'de novo' UMP biosynthetic process"/>
    <property type="evidence" value="ECO:0007669"/>
    <property type="project" value="UniProtKB-UniRule"/>
</dbReference>
<dbReference type="CDD" id="cd04740">
    <property type="entry name" value="DHOD_1B_like"/>
    <property type="match status" value="1"/>
</dbReference>
<dbReference type="FunFam" id="3.20.20.70:FF:000027">
    <property type="entry name" value="Dihydropyrimidine dehydrogenase [NADP(+)]"/>
    <property type="match status" value="1"/>
</dbReference>
<dbReference type="Gene3D" id="3.20.20.70">
    <property type="entry name" value="Aldolase class I"/>
    <property type="match status" value="1"/>
</dbReference>
<dbReference type="HAMAP" id="MF_00224">
    <property type="entry name" value="DHO_dh_type1"/>
    <property type="match status" value="1"/>
</dbReference>
<dbReference type="InterPro" id="IPR013785">
    <property type="entry name" value="Aldolase_TIM"/>
</dbReference>
<dbReference type="InterPro" id="IPR050074">
    <property type="entry name" value="DHO_dehydrogenase"/>
</dbReference>
<dbReference type="InterPro" id="IPR033888">
    <property type="entry name" value="DHOD_1B"/>
</dbReference>
<dbReference type="InterPro" id="IPR024920">
    <property type="entry name" value="Dihydroorotate_DH_1"/>
</dbReference>
<dbReference type="InterPro" id="IPR012135">
    <property type="entry name" value="Dihydroorotate_DH_1_2"/>
</dbReference>
<dbReference type="InterPro" id="IPR005720">
    <property type="entry name" value="Dihydroorotate_DH_cat"/>
</dbReference>
<dbReference type="InterPro" id="IPR001295">
    <property type="entry name" value="Dihydroorotate_DH_CS"/>
</dbReference>
<dbReference type="InterPro" id="IPR049622">
    <property type="entry name" value="Dihydroorotate_DH_I"/>
</dbReference>
<dbReference type="NCBIfam" id="NF005574">
    <property type="entry name" value="PRK07259.1"/>
    <property type="match status" value="1"/>
</dbReference>
<dbReference type="NCBIfam" id="TIGR01037">
    <property type="entry name" value="pyrD_sub1_fam"/>
    <property type="match status" value="1"/>
</dbReference>
<dbReference type="PANTHER" id="PTHR48109:SF1">
    <property type="entry name" value="DIHYDROOROTATE DEHYDROGENASE (FUMARATE)"/>
    <property type="match status" value="1"/>
</dbReference>
<dbReference type="PANTHER" id="PTHR48109">
    <property type="entry name" value="DIHYDROOROTATE DEHYDROGENASE (QUINONE), MITOCHONDRIAL-RELATED"/>
    <property type="match status" value="1"/>
</dbReference>
<dbReference type="Pfam" id="PF01180">
    <property type="entry name" value="DHO_dh"/>
    <property type="match status" value="1"/>
</dbReference>
<dbReference type="PIRSF" id="PIRSF000164">
    <property type="entry name" value="DHO_oxidase"/>
    <property type="match status" value="1"/>
</dbReference>
<dbReference type="SUPFAM" id="SSF51395">
    <property type="entry name" value="FMN-linked oxidoreductases"/>
    <property type="match status" value="1"/>
</dbReference>
<dbReference type="PROSITE" id="PS00911">
    <property type="entry name" value="DHODEHASE_1"/>
    <property type="match status" value="1"/>
</dbReference>
<dbReference type="PROSITE" id="PS00912">
    <property type="entry name" value="DHODEHASE_2"/>
    <property type="match status" value="1"/>
</dbReference>
<feature type="chain" id="PRO_1000100236" description="Dihydroorotate dehydrogenase B (NAD(+)), catalytic subunit">
    <location>
        <begin position="1"/>
        <end position="302"/>
    </location>
</feature>
<feature type="active site" description="Nucleophile">
    <location>
        <position position="128"/>
    </location>
</feature>
<feature type="binding site" evidence="1">
    <location>
        <position position="20"/>
    </location>
    <ligand>
        <name>FMN</name>
        <dbReference type="ChEBI" id="CHEBI:58210"/>
    </ligand>
</feature>
<feature type="binding site" evidence="1">
    <location>
        <begin position="44"/>
        <end position="45"/>
    </location>
    <ligand>
        <name>FMN</name>
        <dbReference type="ChEBI" id="CHEBI:58210"/>
    </ligand>
</feature>
<feature type="binding site" evidence="1">
    <location>
        <position position="44"/>
    </location>
    <ligand>
        <name>substrate</name>
    </ligand>
</feature>
<feature type="binding site" evidence="1">
    <location>
        <begin position="68"/>
        <end position="72"/>
    </location>
    <ligand>
        <name>substrate</name>
    </ligand>
</feature>
<feature type="binding site" evidence="1">
    <location>
        <position position="98"/>
    </location>
    <ligand>
        <name>FMN</name>
        <dbReference type="ChEBI" id="CHEBI:58210"/>
    </ligand>
</feature>
<feature type="binding site" evidence="1">
    <location>
        <position position="125"/>
    </location>
    <ligand>
        <name>FMN</name>
        <dbReference type="ChEBI" id="CHEBI:58210"/>
    </ligand>
</feature>
<feature type="binding site" evidence="1">
    <location>
        <position position="125"/>
    </location>
    <ligand>
        <name>substrate</name>
    </ligand>
</feature>
<feature type="binding site" evidence="1">
    <location>
        <position position="163"/>
    </location>
    <ligand>
        <name>FMN</name>
        <dbReference type="ChEBI" id="CHEBI:58210"/>
    </ligand>
</feature>
<feature type="binding site" evidence="1">
    <location>
        <position position="189"/>
    </location>
    <ligand>
        <name>FMN</name>
        <dbReference type="ChEBI" id="CHEBI:58210"/>
    </ligand>
</feature>
<feature type="binding site" evidence="1">
    <location>
        <begin position="190"/>
        <end position="191"/>
    </location>
    <ligand>
        <name>substrate</name>
    </ligand>
</feature>
<feature type="binding site" evidence="1">
    <location>
        <position position="215"/>
    </location>
    <ligand>
        <name>FMN</name>
        <dbReference type="ChEBI" id="CHEBI:58210"/>
    </ligand>
</feature>
<feature type="binding site" evidence="1">
    <location>
        <begin position="241"/>
        <end position="242"/>
    </location>
    <ligand>
        <name>FMN</name>
        <dbReference type="ChEBI" id="CHEBI:58210"/>
    </ligand>
</feature>
<feature type="binding site" evidence="1">
    <location>
        <begin position="263"/>
        <end position="264"/>
    </location>
    <ligand>
        <name>FMN</name>
        <dbReference type="ChEBI" id="CHEBI:58210"/>
    </ligand>
</feature>
<sequence>MNLQVEVGGLKLKNPVMTASGTFGFGREYGEYIDLNQLGAIVVKGLTVKPKEGNPPPRVYETPCGMLNSVGLQNSGVDAFIEKELPFLRDYDVAVIVNIAGETIEEFAYMAKKLDIDGVDGIEINVSCPNVKKGGMAFGINPEDIFNITKEVKKVTQKTVIVKLTPNVGDIGVCAKAAEDGGADAVSLINTIAGMAINIDTRTPVFKNVIAGLSGPAIKPIALRMVYEAARAVKIPVIGMGGISSFKDALEFMIAGAKAVAIGTCNFVNPNCTIEVIEGIKQYMVLNNIEDINEIIGSLKVD</sequence>